<comment type="function">
    <text evidence="1">Peptide chain release factor 1 directs the termination of translation in response to the peptide chain termination codons UAG and UAA.</text>
</comment>
<comment type="subcellular location">
    <subcellularLocation>
        <location evidence="1">Cytoplasm</location>
    </subcellularLocation>
</comment>
<comment type="PTM">
    <text evidence="1">Methylated by PrmC. Methylation increases the termination efficiency of RF1.</text>
</comment>
<comment type="similarity">
    <text evidence="1">Belongs to the prokaryotic/mitochondrial release factor family.</text>
</comment>
<organism>
    <name type="scientific">Francisella tularensis subsp. tularensis (strain SCHU S4 / Schu 4)</name>
    <dbReference type="NCBI Taxonomy" id="177416"/>
    <lineage>
        <taxon>Bacteria</taxon>
        <taxon>Pseudomonadati</taxon>
        <taxon>Pseudomonadota</taxon>
        <taxon>Gammaproteobacteria</taxon>
        <taxon>Thiotrichales</taxon>
        <taxon>Francisellaceae</taxon>
        <taxon>Francisella</taxon>
    </lineage>
</organism>
<feature type="chain" id="PRO_0000177673" description="Peptide chain release factor 1">
    <location>
        <begin position="1"/>
        <end position="361"/>
    </location>
</feature>
<feature type="region of interest" description="Disordered" evidence="2">
    <location>
        <begin position="287"/>
        <end position="313"/>
    </location>
</feature>
<feature type="compositionally biased region" description="Basic and acidic residues" evidence="2">
    <location>
        <begin position="287"/>
        <end position="297"/>
    </location>
</feature>
<feature type="modified residue" description="N5-methylglutamine" evidence="1">
    <location>
        <position position="237"/>
    </location>
</feature>
<name>RF1_FRATT</name>
<sequence>MKDSIKAKLQSLIERHEEVSALLSEAGIISDQNKFRDLSKEYSHLEPIVKAFKKYTQALEDKQAAYEMLNEKDAELVEMAKEELKLANEAIEKLESELQIFLLPRDPNDDANVFLEIRAGTGGDEASIFSGDLFKMYSKYAEQRGWKIEVISASEGEHGGYKEIISRIYGDGVYSQLKFESGAHRVQRVPATESQGRIHTSACTVAVMPEADEVEGIDINPADIKVDTFRASGAGGQHVNKTDSAIRITHIPTGVVVECQDQRSQHKNRAAAMSMLKSKLLQAEIDKQQKEQSDTRKSLVGSGDRSERIRTYNYPQGRVTDHRINLTLYKLDEVMEGSLDSIIQPLVLEHQADLLATMSDE</sequence>
<evidence type="ECO:0000255" key="1">
    <source>
        <dbReference type="HAMAP-Rule" id="MF_00093"/>
    </source>
</evidence>
<evidence type="ECO:0000256" key="2">
    <source>
        <dbReference type="SAM" id="MobiDB-lite"/>
    </source>
</evidence>
<reference key="1">
    <citation type="journal article" date="2005" name="Nat. Genet.">
        <title>The complete genome sequence of Francisella tularensis, the causative agent of tularemia.</title>
        <authorList>
            <person name="Larsson P."/>
            <person name="Oyston P.C.F."/>
            <person name="Chain P."/>
            <person name="Chu M.C."/>
            <person name="Duffield M."/>
            <person name="Fuxelius H.-H."/>
            <person name="Garcia E."/>
            <person name="Haelltorp G."/>
            <person name="Johansson D."/>
            <person name="Isherwood K.E."/>
            <person name="Karp P.D."/>
            <person name="Larsson E."/>
            <person name="Liu Y."/>
            <person name="Michell S."/>
            <person name="Prior J."/>
            <person name="Prior R."/>
            <person name="Malfatti S."/>
            <person name="Sjoestedt A."/>
            <person name="Svensson K."/>
            <person name="Thompson N."/>
            <person name="Vergez L."/>
            <person name="Wagg J.K."/>
            <person name="Wren B.W."/>
            <person name="Lindler L.E."/>
            <person name="Andersson S.G.E."/>
            <person name="Forsman M."/>
            <person name="Titball R.W."/>
        </authorList>
    </citation>
    <scope>NUCLEOTIDE SEQUENCE [LARGE SCALE GENOMIC DNA]</scope>
    <source>
        <strain>SCHU S4 / Schu 4</strain>
    </source>
</reference>
<proteinExistence type="inferred from homology"/>
<dbReference type="EMBL" id="AJ749949">
    <property type="protein sequence ID" value="CAG44801.1"/>
    <property type="molecule type" value="Genomic_DNA"/>
</dbReference>
<dbReference type="RefSeq" id="WP_003019960.1">
    <property type="nucleotide sequence ID" value="NC_006570.2"/>
</dbReference>
<dbReference type="RefSeq" id="YP_169234.1">
    <property type="nucleotide sequence ID" value="NC_006570.2"/>
</dbReference>
<dbReference type="SMR" id="Q5NIA8"/>
<dbReference type="IntAct" id="Q5NIA8">
    <property type="interactions" value="9"/>
</dbReference>
<dbReference type="STRING" id="177416.FTT_0168"/>
<dbReference type="DNASU" id="3191241"/>
<dbReference type="EnsemblBacteria" id="CAG44801">
    <property type="protein sequence ID" value="CAG44801"/>
    <property type="gene ID" value="FTT_0168"/>
</dbReference>
<dbReference type="KEGG" id="ftu:FTT_0168"/>
<dbReference type="eggNOG" id="COG0216">
    <property type="taxonomic scope" value="Bacteria"/>
</dbReference>
<dbReference type="OrthoDB" id="9806673at2"/>
<dbReference type="Proteomes" id="UP000001174">
    <property type="component" value="Chromosome"/>
</dbReference>
<dbReference type="GO" id="GO:0005737">
    <property type="term" value="C:cytoplasm"/>
    <property type="evidence" value="ECO:0007669"/>
    <property type="project" value="UniProtKB-SubCell"/>
</dbReference>
<dbReference type="GO" id="GO:0016149">
    <property type="term" value="F:translation release factor activity, codon specific"/>
    <property type="evidence" value="ECO:0007669"/>
    <property type="project" value="UniProtKB-UniRule"/>
</dbReference>
<dbReference type="FunFam" id="3.30.160.20:FF:000004">
    <property type="entry name" value="Peptide chain release factor 1"/>
    <property type="match status" value="1"/>
</dbReference>
<dbReference type="FunFam" id="3.30.70.1660:FF:000002">
    <property type="entry name" value="Peptide chain release factor 1"/>
    <property type="match status" value="1"/>
</dbReference>
<dbReference type="FunFam" id="3.30.70.1660:FF:000004">
    <property type="entry name" value="Peptide chain release factor 1"/>
    <property type="match status" value="1"/>
</dbReference>
<dbReference type="Gene3D" id="3.30.160.20">
    <property type="match status" value="1"/>
</dbReference>
<dbReference type="Gene3D" id="3.30.70.1660">
    <property type="match status" value="2"/>
</dbReference>
<dbReference type="Gene3D" id="6.10.140.1950">
    <property type="match status" value="1"/>
</dbReference>
<dbReference type="HAMAP" id="MF_00093">
    <property type="entry name" value="Rel_fac_1"/>
    <property type="match status" value="1"/>
</dbReference>
<dbReference type="InterPro" id="IPR005139">
    <property type="entry name" value="PCRF"/>
</dbReference>
<dbReference type="InterPro" id="IPR000352">
    <property type="entry name" value="Pep_chain_release_fac_I"/>
</dbReference>
<dbReference type="InterPro" id="IPR045853">
    <property type="entry name" value="Pep_chain_release_fac_I_sf"/>
</dbReference>
<dbReference type="InterPro" id="IPR050057">
    <property type="entry name" value="Prokaryotic/Mito_RF"/>
</dbReference>
<dbReference type="InterPro" id="IPR004373">
    <property type="entry name" value="RF-1"/>
</dbReference>
<dbReference type="NCBIfam" id="TIGR00019">
    <property type="entry name" value="prfA"/>
    <property type="match status" value="1"/>
</dbReference>
<dbReference type="NCBIfam" id="NF001859">
    <property type="entry name" value="PRK00591.1"/>
    <property type="match status" value="1"/>
</dbReference>
<dbReference type="PANTHER" id="PTHR43804">
    <property type="entry name" value="LD18447P"/>
    <property type="match status" value="1"/>
</dbReference>
<dbReference type="PANTHER" id="PTHR43804:SF7">
    <property type="entry name" value="LD18447P"/>
    <property type="match status" value="1"/>
</dbReference>
<dbReference type="Pfam" id="PF03462">
    <property type="entry name" value="PCRF"/>
    <property type="match status" value="1"/>
</dbReference>
<dbReference type="Pfam" id="PF00472">
    <property type="entry name" value="RF-1"/>
    <property type="match status" value="1"/>
</dbReference>
<dbReference type="SMART" id="SM00937">
    <property type="entry name" value="PCRF"/>
    <property type="match status" value="1"/>
</dbReference>
<dbReference type="SUPFAM" id="SSF75620">
    <property type="entry name" value="Release factor"/>
    <property type="match status" value="1"/>
</dbReference>
<dbReference type="PROSITE" id="PS00745">
    <property type="entry name" value="RF_PROK_I"/>
    <property type="match status" value="1"/>
</dbReference>
<protein>
    <recommendedName>
        <fullName evidence="1">Peptide chain release factor 1</fullName>
        <shortName evidence="1">RF-1</shortName>
    </recommendedName>
</protein>
<keyword id="KW-0963">Cytoplasm</keyword>
<keyword id="KW-0488">Methylation</keyword>
<keyword id="KW-0648">Protein biosynthesis</keyword>
<keyword id="KW-1185">Reference proteome</keyword>
<accession>Q5NIA8</accession>
<gene>
    <name evidence="1" type="primary">prfA</name>
    <name type="ordered locus">FTT_0168</name>
</gene>